<protein>
    <recommendedName>
        <fullName evidence="1">Phosphoribosylaminoimidazole-succinocarboxamide synthase</fullName>
        <ecNumber evidence="1">6.3.2.6</ecNumber>
    </recommendedName>
    <alternativeName>
        <fullName evidence="1">SAICAR synthetase</fullName>
    </alternativeName>
</protein>
<comment type="catalytic activity">
    <reaction evidence="1">
        <text>5-amino-1-(5-phospho-D-ribosyl)imidazole-4-carboxylate + L-aspartate + ATP = (2S)-2-[5-amino-1-(5-phospho-beta-D-ribosyl)imidazole-4-carboxamido]succinate + ADP + phosphate + 2 H(+)</text>
        <dbReference type="Rhea" id="RHEA:22628"/>
        <dbReference type="ChEBI" id="CHEBI:15378"/>
        <dbReference type="ChEBI" id="CHEBI:29991"/>
        <dbReference type="ChEBI" id="CHEBI:30616"/>
        <dbReference type="ChEBI" id="CHEBI:43474"/>
        <dbReference type="ChEBI" id="CHEBI:58443"/>
        <dbReference type="ChEBI" id="CHEBI:77657"/>
        <dbReference type="ChEBI" id="CHEBI:456216"/>
        <dbReference type="EC" id="6.3.2.6"/>
    </reaction>
</comment>
<comment type="pathway">
    <text evidence="1">Purine metabolism; IMP biosynthesis via de novo pathway; 5-amino-1-(5-phospho-D-ribosyl)imidazole-4-carboxamide from 5-amino-1-(5-phospho-D-ribosyl)imidazole-4-carboxylate: step 1/2.</text>
</comment>
<comment type="similarity">
    <text evidence="1">Belongs to the SAICAR synthetase family.</text>
</comment>
<organism>
    <name type="scientific">Sinorhizobium fredii (strain NBRC 101917 / NGR234)</name>
    <dbReference type="NCBI Taxonomy" id="394"/>
    <lineage>
        <taxon>Bacteria</taxon>
        <taxon>Pseudomonadati</taxon>
        <taxon>Pseudomonadota</taxon>
        <taxon>Alphaproteobacteria</taxon>
        <taxon>Hyphomicrobiales</taxon>
        <taxon>Rhizobiaceae</taxon>
        <taxon>Sinorhizobium/Ensifer group</taxon>
        <taxon>Sinorhizobium</taxon>
    </lineage>
</organism>
<keyword id="KW-0067">ATP-binding</keyword>
<keyword id="KW-0436">Ligase</keyword>
<keyword id="KW-0547">Nucleotide-binding</keyword>
<keyword id="KW-0658">Purine biosynthesis</keyword>
<keyword id="KW-1185">Reference proteome</keyword>
<name>PUR7_SINFN</name>
<proteinExistence type="inferred from homology"/>
<feature type="chain" id="PRO_1000122924" description="Phosphoribosylaminoimidazole-succinocarboxamide synthase">
    <location>
        <begin position="1"/>
        <end position="254"/>
    </location>
</feature>
<reference key="1">
    <citation type="journal article" date="2009" name="Appl. Environ. Microbiol.">
        <title>Rhizobium sp. strain NGR234 possesses a remarkable number of secretion systems.</title>
        <authorList>
            <person name="Schmeisser C."/>
            <person name="Liesegang H."/>
            <person name="Krysciak D."/>
            <person name="Bakkou N."/>
            <person name="Le Quere A."/>
            <person name="Wollherr A."/>
            <person name="Heinemeyer I."/>
            <person name="Morgenstern B."/>
            <person name="Pommerening-Roeser A."/>
            <person name="Flores M."/>
            <person name="Palacios R."/>
            <person name="Brenner S."/>
            <person name="Gottschalk G."/>
            <person name="Schmitz R.A."/>
            <person name="Broughton W.J."/>
            <person name="Perret X."/>
            <person name="Strittmatter A.W."/>
            <person name="Streit W.R."/>
        </authorList>
    </citation>
    <scope>NUCLEOTIDE SEQUENCE [LARGE SCALE GENOMIC DNA]</scope>
    <source>
        <strain>NBRC 101917 / NGR234</strain>
    </source>
</reference>
<evidence type="ECO:0000255" key="1">
    <source>
        <dbReference type="HAMAP-Rule" id="MF_00137"/>
    </source>
</evidence>
<dbReference type="EC" id="6.3.2.6" evidence="1"/>
<dbReference type="EMBL" id="CP001389">
    <property type="protein sequence ID" value="ACP25384.1"/>
    <property type="molecule type" value="Genomic_DNA"/>
</dbReference>
<dbReference type="RefSeq" id="WP_012708153.1">
    <property type="nucleotide sequence ID" value="NC_012587.1"/>
</dbReference>
<dbReference type="RefSeq" id="YP_002826137.1">
    <property type="nucleotide sequence ID" value="NC_012587.1"/>
</dbReference>
<dbReference type="SMR" id="C3MD65"/>
<dbReference type="STRING" id="394.NGR_c16190"/>
<dbReference type="GeneID" id="48973243"/>
<dbReference type="KEGG" id="rhi:NGR_c16190"/>
<dbReference type="PATRIC" id="fig|394.7.peg.4436"/>
<dbReference type="eggNOG" id="COG0152">
    <property type="taxonomic scope" value="Bacteria"/>
</dbReference>
<dbReference type="HOGENOM" id="CLU_061495_2_0_5"/>
<dbReference type="OrthoDB" id="9801549at2"/>
<dbReference type="UniPathway" id="UPA00074">
    <property type="reaction ID" value="UER00131"/>
</dbReference>
<dbReference type="Proteomes" id="UP000001054">
    <property type="component" value="Chromosome"/>
</dbReference>
<dbReference type="GO" id="GO:0005829">
    <property type="term" value="C:cytosol"/>
    <property type="evidence" value="ECO:0007669"/>
    <property type="project" value="TreeGrafter"/>
</dbReference>
<dbReference type="GO" id="GO:0005524">
    <property type="term" value="F:ATP binding"/>
    <property type="evidence" value="ECO:0007669"/>
    <property type="project" value="UniProtKB-KW"/>
</dbReference>
<dbReference type="GO" id="GO:0004639">
    <property type="term" value="F:phosphoribosylaminoimidazolesuccinocarboxamide synthase activity"/>
    <property type="evidence" value="ECO:0007669"/>
    <property type="project" value="UniProtKB-UniRule"/>
</dbReference>
<dbReference type="GO" id="GO:0006189">
    <property type="term" value="P:'de novo' IMP biosynthetic process"/>
    <property type="evidence" value="ECO:0007669"/>
    <property type="project" value="UniProtKB-UniRule"/>
</dbReference>
<dbReference type="GO" id="GO:0009236">
    <property type="term" value="P:cobalamin biosynthetic process"/>
    <property type="evidence" value="ECO:0007669"/>
    <property type="project" value="InterPro"/>
</dbReference>
<dbReference type="CDD" id="cd01415">
    <property type="entry name" value="SAICAR_synt_PurC"/>
    <property type="match status" value="1"/>
</dbReference>
<dbReference type="FunFam" id="3.30.470.20:FF:000006">
    <property type="entry name" value="Phosphoribosylaminoimidazole-succinocarboxamide synthase"/>
    <property type="match status" value="1"/>
</dbReference>
<dbReference type="Gene3D" id="3.30.470.20">
    <property type="entry name" value="ATP-grasp fold, B domain"/>
    <property type="match status" value="1"/>
</dbReference>
<dbReference type="Gene3D" id="3.30.200.20">
    <property type="entry name" value="Phosphorylase Kinase, domain 1"/>
    <property type="match status" value="1"/>
</dbReference>
<dbReference type="HAMAP" id="MF_00137">
    <property type="entry name" value="SAICAR_synth"/>
    <property type="match status" value="1"/>
</dbReference>
<dbReference type="InterPro" id="IPR028923">
    <property type="entry name" value="SAICAR_synt/ADE2_N"/>
</dbReference>
<dbReference type="InterPro" id="IPR033934">
    <property type="entry name" value="SAICAR_synt_PurC"/>
</dbReference>
<dbReference type="InterPro" id="IPR001636">
    <property type="entry name" value="SAICAR_synth"/>
</dbReference>
<dbReference type="InterPro" id="IPR050089">
    <property type="entry name" value="SAICAR_synthetase"/>
</dbReference>
<dbReference type="InterPro" id="IPR018236">
    <property type="entry name" value="SAICAR_synthetase_CS"/>
</dbReference>
<dbReference type="NCBIfam" id="TIGR00081">
    <property type="entry name" value="purC"/>
    <property type="match status" value="1"/>
</dbReference>
<dbReference type="PANTHER" id="PTHR43599">
    <property type="entry name" value="MULTIFUNCTIONAL PROTEIN ADE2"/>
    <property type="match status" value="1"/>
</dbReference>
<dbReference type="PANTHER" id="PTHR43599:SF3">
    <property type="entry name" value="SI:DKEY-6E2.2"/>
    <property type="match status" value="1"/>
</dbReference>
<dbReference type="Pfam" id="PF01259">
    <property type="entry name" value="SAICAR_synt"/>
    <property type="match status" value="1"/>
</dbReference>
<dbReference type="SUPFAM" id="SSF56104">
    <property type="entry name" value="SAICAR synthase-like"/>
    <property type="match status" value="1"/>
</dbReference>
<dbReference type="PROSITE" id="PS01057">
    <property type="entry name" value="SAICAR_SYNTHETASE_1"/>
    <property type="match status" value="1"/>
</dbReference>
<sequence>MNRRRRIYEGKAKILYEGPEPGTLIQFFKDDATAFNKKKHDVIDGKGVLNNRISEYIFTHLNKIGIPTHFIRRLNMREQLIKEVEIIPLEIVVRNVAAGSLAKRLGIEEGTVLPRSIIEFYYKADALDDPMVSEEHITAFGWASPQELDDIMALAIRINDFLSGLFLGVGIQLVDFKIECGRLYEGDMMRIILADEISPDSCRLWDVETKEKMDKDRFRRDMGGLVEAYQEVARRLGIINENEPPRGSGPVLVK</sequence>
<accession>C3MD65</accession>
<gene>
    <name evidence="1" type="primary">purC</name>
    <name type="ordered locus">NGR_c16190</name>
</gene>